<organism>
    <name type="scientific">Ectopseudomonas mendocina (strain ymp)</name>
    <name type="common">Pseudomonas mendocina</name>
    <dbReference type="NCBI Taxonomy" id="399739"/>
    <lineage>
        <taxon>Bacteria</taxon>
        <taxon>Pseudomonadati</taxon>
        <taxon>Pseudomonadota</taxon>
        <taxon>Gammaproteobacteria</taxon>
        <taxon>Pseudomonadales</taxon>
        <taxon>Pseudomonadaceae</taxon>
        <taxon>Ectopseudomonas</taxon>
    </lineage>
</organism>
<gene>
    <name evidence="1" type="primary">rplI</name>
    <name type="ordered locus">Pmen_0648</name>
</gene>
<dbReference type="EMBL" id="CP000680">
    <property type="protein sequence ID" value="ABP83416.1"/>
    <property type="molecule type" value="Genomic_DNA"/>
</dbReference>
<dbReference type="SMR" id="A4XQ00"/>
<dbReference type="STRING" id="399739.Pmen_0648"/>
<dbReference type="KEGG" id="pmy:Pmen_0648"/>
<dbReference type="PATRIC" id="fig|399739.8.peg.655"/>
<dbReference type="eggNOG" id="COG0359">
    <property type="taxonomic scope" value="Bacteria"/>
</dbReference>
<dbReference type="HOGENOM" id="CLU_078938_4_1_6"/>
<dbReference type="OrthoDB" id="9788336at2"/>
<dbReference type="GO" id="GO:1990904">
    <property type="term" value="C:ribonucleoprotein complex"/>
    <property type="evidence" value="ECO:0007669"/>
    <property type="project" value="UniProtKB-KW"/>
</dbReference>
<dbReference type="GO" id="GO:0005840">
    <property type="term" value="C:ribosome"/>
    <property type="evidence" value="ECO:0007669"/>
    <property type="project" value="UniProtKB-KW"/>
</dbReference>
<dbReference type="GO" id="GO:0019843">
    <property type="term" value="F:rRNA binding"/>
    <property type="evidence" value="ECO:0007669"/>
    <property type="project" value="UniProtKB-UniRule"/>
</dbReference>
<dbReference type="GO" id="GO:0003735">
    <property type="term" value="F:structural constituent of ribosome"/>
    <property type="evidence" value="ECO:0007669"/>
    <property type="project" value="InterPro"/>
</dbReference>
<dbReference type="GO" id="GO:0006412">
    <property type="term" value="P:translation"/>
    <property type="evidence" value="ECO:0007669"/>
    <property type="project" value="UniProtKB-UniRule"/>
</dbReference>
<dbReference type="FunFam" id="3.40.5.10:FF:000001">
    <property type="entry name" value="50S ribosomal protein L9"/>
    <property type="match status" value="1"/>
</dbReference>
<dbReference type="Gene3D" id="3.10.430.100">
    <property type="entry name" value="Ribosomal protein L9, C-terminal domain"/>
    <property type="match status" value="1"/>
</dbReference>
<dbReference type="Gene3D" id="3.40.5.10">
    <property type="entry name" value="Ribosomal protein L9, N-terminal domain"/>
    <property type="match status" value="1"/>
</dbReference>
<dbReference type="HAMAP" id="MF_00503">
    <property type="entry name" value="Ribosomal_bL9"/>
    <property type="match status" value="1"/>
</dbReference>
<dbReference type="InterPro" id="IPR000244">
    <property type="entry name" value="Ribosomal_bL9"/>
</dbReference>
<dbReference type="InterPro" id="IPR009027">
    <property type="entry name" value="Ribosomal_bL9/RNase_H1_N"/>
</dbReference>
<dbReference type="InterPro" id="IPR020594">
    <property type="entry name" value="Ribosomal_bL9_bac/chp"/>
</dbReference>
<dbReference type="InterPro" id="IPR020069">
    <property type="entry name" value="Ribosomal_bL9_C"/>
</dbReference>
<dbReference type="InterPro" id="IPR036791">
    <property type="entry name" value="Ribosomal_bL9_C_sf"/>
</dbReference>
<dbReference type="InterPro" id="IPR020070">
    <property type="entry name" value="Ribosomal_bL9_N"/>
</dbReference>
<dbReference type="InterPro" id="IPR036935">
    <property type="entry name" value="Ribosomal_bL9_N_sf"/>
</dbReference>
<dbReference type="NCBIfam" id="TIGR00158">
    <property type="entry name" value="L9"/>
    <property type="match status" value="1"/>
</dbReference>
<dbReference type="PANTHER" id="PTHR21368">
    <property type="entry name" value="50S RIBOSOMAL PROTEIN L9"/>
    <property type="match status" value="1"/>
</dbReference>
<dbReference type="Pfam" id="PF03948">
    <property type="entry name" value="Ribosomal_L9_C"/>
    <property type="match status" value="1"/>
</dbReference>
<dbReference type="Pfam" id="PF01281">
    <property type="entry name" value="Ribosomal_L9_N"/>
    <property type="match status" value="1"/>
</dbReference>
<dbReference type="SUPFAM" id="SSF55658">
    <property type="entry name" value="L9 N-domain-like"/>
    <property type="match status" value="1"/>
</dbReference>
<dbReference type="SUPFAM" id="SSF55653">
    <property type="entry name" value="Ribosomal protein L9 C-domain"/>
    <property type="match status" value="1"/>
</dbReference>
<dbReference type="PROSITE" id="PS00651">
    <property type="entry name" value="RIBOSOMAL_L9"/>
    <property type="match status" value="1"/>
</dbReference>
<proteinExistence type="inferred from homology"/>
<comment type="function">
    <text evidence="1">Binds to the 23S rRNA.</text>
</comment>
<comment type="similarity">
    <text evidence="1">Belongs to the bacterial ribosomal protein bL9 family.</text>
</comment>
<sequence>MEVILLEKIANLGNLGDKVNVKAGYGRNFLLPQGKATAATAENVAAFEARRAELEKLAAEKKASAEARAAQLAELEVTITATAGDEGKLFGSIGTHDIADALTASGVEVAKAEVRLPNGTIRQVGEYDVALHLHTDVEATVKVIVVAA</sequence>
<reference key="1">
    <citation type="submission" date="2007-04" db="EMBL/GenBank/DDBJ databases">
        <title>Complete sequence of Pseudomonas mendocina ymp.</title>
        <authorList>
            <consortium name="US DOE Joint Genome Institute"/>
            <person name="Copeland A."/>
            <person name="Lucas S."/>
            <person name="Lapidus A."/>
            <person name="Barry K."/>
            <person name="Glavina del Rio T."/>
            <person name="Dalin E."/>
            <person name="Tice H."/>
            <person name="Pitluck S."/>
            <person name="Kiss H."/>
            <person name="Brettin T."/>
            <person name="Detter J.C."/>
            <person name="Bruce D."/>
            <person name="Han C."/>
            <person name="Schmutz J."/>
            <person name="Larimer F."/>
            <person name="Land M."/>
            <person name="Hauser L."/>
            <person name="Kyrpides N."/>
            <person name="Mikhailova N."/>
            <person name="Hersman L."/>
            <person name="Dubois J."/>
            <person name="Maurice P."/>
            <person name="Richardson P."/>
        </authorList>
    </citation>
    <scope>NUCLEOTIDE SEQUENCE [LARGE SCALE GENOMIC DNA]</scope>
    <source>
        <strain>ymp</strain>
    </source>
</reference>
<keyword id="KW-0687">Ribonucleoprotein</keyword>
<keyword id="KW-0689">Ribosomal protein</keyword>
<keyword id="KW-0694">RNA-binding</keyword>
<keyword id="KW-0699">rRNA-binding</keyword>
<feature type="chain" id="PRO_1000014839" description="Large ribosomal subunit protein bL9">
    <location>
        <begin position="1"/>
        <end position="148"/>
    </location>
</feature>
<accession>A4XQ00</accession>
<protein>
    <recommendedName>
        <fullName evidence="1">Large ribosomal subunit protein bL9</fullName>
    </recommendedName>
    <alternativeName>
        <fullName evidence="2">50S ribosomal protein L9</fullName>
    </alternativeName>
</protein>
<name>RL9_ECTM1</name>
<evidence type="ECO:0000255" key="1">
    <source>
        <dbReference type="HAMAP-Rule" id="MF_00503"/>
    </source>
</evidence>
<evidence type="ECO:0000305" key="2"/>